<dbReference type="EC" id="4.2.3.119" evidence="4"/>
<dbReference type="EC" id="4.2.3.120" evidence="4"/>
<dbReference type="EMBL" id="HQ426166">
    <property type="protein sequence ID" value="ADZ45509.1"/>
    <property type="molecule type" value="mRNA"/>
</dbReference>
<dbReference type="SMR" id="F2XFA8"/>
<dbReference type="UniPathway" id="UPA00924"/>
<dbReference type="GO" id="GO:0009507">
    <property type="term" value="C:chloroplast"/>
    <property type="evidence" value="ECO:0007669"/>
    <property type="project" value="UniProtKB-SubCell"/>
</dbReference>
<dbReference type="GO" id="GO:0016829">
    <property type="term" value="F:lyase activity"/>
    <property type="evidence" value="ECO:0000314"/>
    <property type="project" value="UniProtKB"/>
</dbReference>
<dbReference type="GO" id="GO:0000287">
    <property type="term" value="F:magnesium ion binding"/>
    <property type="evidence" value="ECO:0007669"/>
    <property type="project" value="InterPro"/>
</dbReference>
<dbReference type="GO" id="GO:0050550">
    <property type="term" value="F:pinene synthase activity"/>
    <property type="evidence" value="ECO:0000314"/>
    <property type="project" value="UniProtKB"/>
</dbReference>
<dbReference type="GO" id="GO:0046248">
    <property type="term" value="P:alpha-pinene biosynthetic process"/>
    <property type="evidence" value="ECO:0000314"/>
    <property type="project" value="UniProtKB"/>
</dbReference>
<dbReference type="GO" id="GO:0016102">
    <property type="term" value="P:diterpenoid biosynthetic process"/>
    <property type="evidence" value="ECO:0007669"/>
    <property type="project" value="InterPro"/>
</dbReference>
<dbReference type="GO" id="GO:0010597">
    <property type="term" value="P:green leaf volatile biosynthetic process"/>
    <property type="evidence" value="ECO:0000314"/>
    <property type="project" value="UniProtKB"/>
</dbReference>
<dbReference type="GO" id="GO:0016099">
    <property type="term" value="P:monoterpenoid biosynthetic process"/>
    <property type="evidence" value="ECO:0000314"/>
    <property type="project" value="UniProtKB"/>
</dbReference>
<dbReference type="CDD" id="cd00684">
    <property type="entry name" value="Terpene_cyclase_plant_C1"/>
    <property type="match status" value="1"/>
</dbReference>
<dbReference type="FunFam" id="1.50.10.130:FF:000004">
    <property type="entry name" value="Carene synthase, chloroplastic"/>
    <property type="match status" value="1"/>
</dbReference>
<dbReference type="FunFam" id="1.10.600.10:FF:000005">
    <property type="entry name" value="Ent-kaur-16-ene synthase, chloroplastic"/>
    <property type="match status" value="1"/>
</dbReference>
<dbReference type="Gene3D" id="1.10.600.10">
    <property type="entry name" value="Farnesyl Diphosphate Synthase"/>
    <property type="match status" value="1"/>
</dbReference>
<dbReference type="Gene3D" id="1.50.10.130">
    <property type="entry name" value="Terpene synthase, N-terminal domain"/>
    <property type="match status" value="1"/>
</dbReference>
<dbReference type="InterPro" id="IPR008949">
    <property type="entry name" value="Isoprenoid_synthase_dom_sf"/>
</dbReference>
<dbReference type="InterPro" id="IPR034741">
    <property type="entry name" value="Terpene_cyclase-like_1_C"/>
</dbReference>
<dbReference type="InterPro" id="IPR044814">
    <property type="entry name" value="Terpene_cyclase_plant_C1"/>
</dbReference>
<dbReference type="InterPro" id="IPR001906">
    <property type="entry name" value="Terpene_synth_N"/>
</dbReference>
<dbReference type="InterPro" id="IPR036965">
    <property type="entry name" value="Terpene_synth_N_sf"/>
</dbReference>
<dbReference type="InterPro" id="IPR050148">
    <property type="entry name" value="Terpene_synthase-like"/>
</dbReference>
<dbReference type="InterPro" id="IPR005630">
    <property type="entry name" value="Terpene_synthase_metal-bd"/>
</dbReference>
<dbReference type="InterPro" id="IPR008930">
    <property type="entry name" value="Terpenoid_cyclase/PrenylTrfase"/>
</dbReference>
<dbReference type="PANTHER" id="PTHR31225">
    <property type="entry name" value="OS04G0344100 PROTEIN-RELATED"/>
    <property type="match status" value="1"/>
</dbReference>
<dbReference type="Pfam" id="PF01397">
    <property type="entry name" value="Terpene_synth"/>
    <property type="match status" value="1"/>
</dbReference>
<dbReference type="Pfam" id="PF03936">
    <property type="entry name" value="Terpene_synth_C"/>
    <property type="match status" value="1"/>
</dbReference>
<dbReference type="SFLD" id="SFLDS00005">
    <property type="entry name" value="Isoprenoid_Synthase_Type_I"/>
    <property type="match status" value="1"/>
</dbReference>
<dbReference type="SFLD" id="SFLDG01019">
    <property type="entry name" value="Terpene_Cyclase_Like_1_C_Termi"/>
    <property type="match status" value="1"/>
</dbReference>
<dbReference type="SFLD" id="SFLDG01014">
    <property type="entry name" value="Terpene_Cyclase_Like_1_N-term"/>
    <property type="match status" value="1"/>
</dbReference>
<dbReference type="SUPFAM" id="SSF48239">
    <property type="entry name" value="Terpenoid cyclases/Protein prenyltransferases"/>
    <property type="match status" value="1"/>
</dbReference>
<dbReference type="SUPFAM" id="SSF48576">
    <property type="entry name" value="Terpenoid synthases"/>
    <property type="match status" value="1"/>
</dbReference>
<keyword id="KW-0150">Chloroplast</keyword>
<keyword id="KW-0456">Lyase</keyword>
<keyword id="KW-0460">Magnesium</keyword>
<keyword id="KW-0479">Metal-binding</keyword>
<keyword id="KW-0934">Plastid</keyword>
<keyword id="KW-0809">Transit peptide</keyword>
<protein>
    <recommendedName>
        <fullName evidence="5">(-)-alpha-pinene synthase 1, chloroplastic</fullName>
        <ecNumber evidence="4">4.2.3.119</ecNumber>
    </recommendedName>
    <alternativeName>
        <fullName evidence="5">(-)-beta-pinene synthase 1</fullName>
        <ecNumber evidence="4">4.2.3.120</ecNumber>
    </alternativeName>
    <alternativeName>
        <fullName evidence="5">Terpene synthase TPS-Pin</fullName>
        <shortName>PsTPS-Pin</shortName>
    </alternativeName>
</protein>
<sequence length="627" mass="71370">MALVSIAPLASKSCLHKSLSSSAHELKTICRTIPTLGMSRRGKSATPSMSMSLTTTVSDDGVQRRMGDFHSNLWNDDFIQSLSTSYGEPSYRERAERLIGEVKKMFNSMSSEDGELISPHNDLIQRVWMVDSVERLGIERHFKNEIKSALDYVYSYWSEKGIGCGRESVVADLNSTALGFRTLRLHGYAVSADVLNLFKDQNGQFACSPSQTEEEIRSVLNLYRASLIAFPGEKVMEEAEIFSAKYLEESLQKISVSSLSQEIRDVLEYGWHTYLPRMEARNHIDVFGQDTQNSKSCINTEKLLELAKLEFNIFHSLQKRELEYLVRWWKDSGSPQMTFCRHRHVEYYTLASCIAFEPQHSGFRLGFAKACHIITILDDMYDTFGTVDELELFTAAMKRWDPSAADCLPEYMKGVYLILYDTVNEMSREAEKAQGRDTLDYARRAWDDYLDSYMQEAKWIATGYLPTFAEYYENGKVSSGHRTSALQPILTMDIPFPPHILKEVDFPSKLNDLACAILRLRGDTRCYKADRARGEEASSISCYMKDNPGATEEDALDHINAMISDVIRGLNWELLNPNSSVPISSKKHVFDISRAFHYGYKYRDGYSVANIETKSLVKRTVIDPVTL</sequence>
<evidence type="ECO:0000250" key="1">
    <source>
        <dbReference type="UniProtKB" id="A0A1C9J6A7"/>
    </source>
</evidence>
<evidence type="ECO:0000250" key="2">
    <source>
        <dbReference type="UniProtKB" id="Q40577"/>
    </source>
</evidence>
<evidence type="ECO:0000255" key="3"/>
<evidence type="ECO:0000269" key="4">
    <source>
    </source>
</evidence>
<evidence type="ECO:0000303" key="5">
    <source>
    </source>
</evidence>
<evidence type="ECO:0000305" key="6"/>
<comment type="function">
    <text evidence="4">Terpene synthase (TPS) involved in the biosynthesis of monoterpene natural products included in conifer oleoresin secretions and volatile emissions; these compounds contribute to biotic and abiotic stress defense against herbivores and pathogens (PubMed:21385377). Catalyzes the conversion of (2E)-geranyl diphosphate (GPP) to (1S,5S)-beta-pinene (PubMed:21385377).</text>
</comment>
<comment type="catalytic activity">
    <reaction evidence="4">
        <text>(2E)-geranyl diphosphate = (1S,5S)-beta-pinene + diphosphate</text>
        <dbReference type="Rhea" id="RHEA:25496"/>
        <dbReference type="ChEBI" id="CHEBI:28359"/>
        <dbReference type="ChEBI" id="CHEBI:33019"/>
        <dbReference type="ChEBI" id="CHEBI:58057"/>
        <dbReference type="EC" id="4.2.3.120"/>
    </reaction>
</comment>
<comment type="catalytic activity">
    <reaction evidence="4">
        <text>(2E)-geranyl diphosphate = (1S,5S)-alpha-pinene + diphosphate</text>
        <dbReference type="Rhea" id="RHEA:25488"/>
        <dbReference type="ChEBI" id="CHEBI:28660"/>
        <dbReference type="ChEBI" id="CHEBI:33019"/>
        <dbReference type="ChEBI" id="CHEBI:58057"/>
        <dbReference type="EC" id="4.2.3.119"/>
    </reaction>
</comment>
<comment type="cofactor">
    <cofactor evidence="1">
        <name>Mg(2+)</name>
        <dbReference type="ChEBI" id="CHEBI:18420"/>
    </cofactor>
    <cofactor evidence="1">
        <name>Mn(2+)</name>
        <dbReference type="ChEBI" id="CHEBI:29035"/>
    </cofactor>
    <text evidence="1">Binds 3 Mg(2+) or Mn(2+) ions per subunit.</text>
</comment>
<comment type="pathway">
    <text evidence="4">Terpene metabolism; oleoresin biosynthesis.</text>
</comment>
<comment type="subcellular location">
    <subcellularLocation>
        <location evidence="3">Plastid</location>
        <location evidence="3">Chloroplast</location>
    </subcellularLocation>
</comment>
<comment type="domain">
    <text evidence="1">The Asp-Asp-Xaa-Xaa-Asp/Glu (DDXXD/E) motif is important for the catalytic activity, presumably through binding to Mg(2+).</text>
</comment>
<comment type="similarity">
    <text evidence="6">Belongs to the terpene synthase family. Tpsd subfamily.</text>
</comment>
<accession>F2XFA8</accession>
<feature type="transit peptide" description="Chloroplast" evidence="3">
    <location>
        <begin position="1"/>
        <end position="36"/>
    </location>
</feature>
<feature type="chain" id="PRO_0000454410" description="(-)-alpha-pinene synthase 1, chloroplastic">
    <location>
        <begin position="37"/>
        <end position="627"/>
    </location>
</feature>
<feature type="short sequence motif" description="DDXXD motif" evidence="1">
    <location>
        <begin position="378"/>
        <end position="382"/>
    </location>
</feature>
<feature type="binding site" evidence="2">
    <location>
        <position position="378"/>
    </location>
    <ligand>
        <name>Mg(2+)</name>
        <dbReference type="ChEBI" id="CHEBI:18420"/>
        <label>1</label>
    </ligand>
</feature>
<feature type="binding site" evidence="2">
    <location>
        <position position="378"/>
    </location>
    <ligand>
        <name>Mg(2+)</name>
        <dbReference type="ChEBI" id="CHEBI:18420"/>
        <label>2</label>
    </ligand>
</feature>
<feature type="binding site" evidence="2">
    <location>
        <position position="382"/>
    </location>
    <ligand>
        <name>Mg(2+)</name>
        <dbReference type="ChEBI" id="CHEBI:18420"/>
        <label>1</label>
    </ligand>
</feature>
<feature type="binding site" evidence="2">
    <location>
        <position position="382"/>
    </location>
    <ligand>
        <name>Mg(2+)</name>
        <dbReference type="ChEBI" id="CHEBI:18420"/>
        <label>2</label>
    </ligand>
</feature>
<feature type="binding site" evidence="2">
    <location>
        <position position="530"/>
    </location>
    <ligand>
        <name>Mg(2+)</name>
        <dbReference type="ChEBI" id="CHEBI:18420"/>
        <label>3</label>
    </ligand>
</feature>
<gene>
    <name evidence="5" type="primary">TPS-Pin</name>
</gene>
<organism>
    <name type="scientific">Picea sitchensis</name>
    <name type="common">Sitka spruce</name>
    <name type="synonym">Pinus sitchensis</name>
    <dbReference type="NCBI Taxonomy" id="3332"/>
    <lineage>
        <taxon>Eukaryota</taxon>
        <taxon>Viridiplantae</taxon>
        <taxon>Streptophyta</taxon>
        <taxon>Embryophyta</taxon>
        <taxon>Tracheophyta</taxon>
        <taxon>Spermatophyta</taxon>
        <taxon>Pinopsida</taxon>
        <taxon>Pinidae</taxon>
        <taxon>Conifers I</taxon>
        <taxon>Pinales</taxon>
        <taxon>Pinaceae</taxon>
        <taxon>Picea</taxon>
    </lineage>
</organism>
<reference key="1">
    <citation type="journal article" date="2011" name="BMC Plant Biol.">
        <title>Transcriptome mining, functional characterization, and phylogeny of a large terpene synthase gene family in spruce (Picea spp.).</title>
        <authorList>
            <person name="Keeling C.I."/>
            <person name="Weisshaar S."/>
            <person name="Ralph S.G."/>
            <person name="Jancsik S."/>
            <person name="Hamberger B."/>
            <person name="Dullat H.K."/>
            <person name="Bohlmann J."/>
        </authorList>
    </citation>
    <scope>NUCLEOTIDE SEQUENCE [MRNA]</scope>
    <scope>CATALYTIC ACTIVITY</scope>
    <scope>FUNCTION</scope>
    <scope>PATHWAY</scope>
    <scope>GENE FAMILY</scope>
    <source>
        <strain>cv. FB3-425</strain>
    </source>
</reference>
<name>PINS1_PICSI</name>
<proteinExistence type="evidence at protein level"/>